<accession>P86967</accession>
<sequence>MSRLTLLVLLVIAAVIQKVHGQGRENEKKNEHEPGNQDGGNQNEKTERNLREPNRQTRRFNTRNDNRNRNIMQKRAMLLWQRRMNQRSNQNNFGNNRSIPPTNTFNRNRSRTKSNKSEVEKENGSNKASKGKMQSGDGGGNGSEKEGPERRKVQHRIAKRFQKRHPSNSPKPKPARKTTNQQYRRHFMNNYNNKYWNWRRNMLNRRRTSPQHYQNQQARWRYYRYGPYTWYRYKNKWRLVRYNNMYRRNIKTNQSKKSNQNNQGD</sequence>
<keyword id="KW-0903">Direct protein sequencing</keyword>
<keyword id="KW-0964">Secreted</keyword>
<keyword id="KW-0732">Signal</keyword>
<organism>
    <name type="scientific">Pinctada maxima</name>
    <name type="common">Silver-lipped pearl oyster</name>
    <name type="synonym">White-lipped pearl oyster</name>
    <dbReference type="NCBI Taxonomy" id="104660"/>
    <lineage>
        <taxon>Eukaryota</taxon>
        <taxon>Metazoa</taxon>
        <taxon>Spiralia</taxon>
        <taxon>Lophotrochozoa</taxon>
        <taxon>Mollusca</taxon>
        <taxon>Bivalvia</taxon>
        <taxon>Autobranchia</taxon>
        <taxon>Pteriomorphia</taxon>
        <taxon>Pterioida</taxon>
        <taxon>Pterioidea</taxon>
        <taxon>Pteriidae</taxon>
        <taxon>Pinctada</taxon>
    </lineage>
</organism>
<comment type="subcellular location">
    <subcellularLocation>
        <location evidence="4">Secreted</location>
    </subcellularLocation>
</comment>
<comment type="tissue specificity">
    <text evidence="4">Nacreous layer of shell (at protein level). Expressed primarily in the mantle with highest level in the mantle pallium and lower level in the mantle edge.</text>
</comment>
<comment type="sequence caution" evidence="5">
    <conflict type="frameshift">
        <sequence resource="EMBL" id="GT280013"/>
    </conflict>
</comment>
<comment type="sequence caution" evidence="5">
    <conflict type="frameshift">
        <sequence resource="EMBL" id="GT281828"/>
    </conflict>
</comment>
<feature type="signal peptide" evidence="1">
    <location>
        <begin position="1"/>
        <end position="21"/>
    </location>
</feature>
<feature type="chain" id="PRO_0000412720" description="Asparagine-rich protein" evidence="1">
    <location>
        <begin position="22"/>
        <end position="265"/>
    </location>
</feature>
<feature type="region of interest" description="Disordered" evidence="2">
    <location>
        <begin position="20"/>
        <end position="71"/>
    </location>
</feature>
<feature type="region of interest" description="Disordered" evidence="2">
    <location>
        <begin position="88"/>
        <end position="183"/>
    </location>
</feature>
<feature type="compositionally biased region" description="Basic and acidic residues" evidence="2">
    <location>
        <begin position="22"/>
        <end position="35"/>
    </location>
</feature>
<feature type="compositionally biased region" description="Basic and acidic residues" evidence="2">
    <location>
        <begin position="44"/>
        <end position="55"/>
    </location>
</feature>
<feature type="compositionally biased region" description="Low complexity" evidence="2">
    <location>
        <begin position="88"/>
        <end position="98"/>
    </location>
</feature>
<feature type="compositionally biased region" description="Basic and acidic residues" evidence="2">
    <location>
        <begin position="115"/>
        <end position="124"/>
    </location>
</feature>
<feature type="compositionally biased region" description="Basic residues" evidence="2">
    <location>
        <begin position="152"/>
        <end position="166"/>
    </location>
</feature>
<feature type="sequence conflict" description="In Ref. 1; GT281522/GT279760." evidence="5" ref="1">
    <original>D</original>
    <variation>G</variation>
    <location>
        <position position="65"/>
    </location>
</feature>
<feature type="sequence conflict" description="In Ref. 1; GT281522/GT279760/GT283071." evidence="5" ref="1">
    <original>A</original>
    <variation>T</variation>
    <location>
        <position position="128"/>
    </location>
</feature>
<feature type="sequence conflict" description="In Ref. 1; GT280013." evidence="5" ref="1">
    <original>N</original>
    <variation>H</variation>
    <location>
        <position position="204"/>
    </location>
</feature>
<feature type="sequence conflict" description="In Ref. 1; GT277780." evidence="5" ref="1">
    <original>Q</original>
    <variation>P</variation>
    <location>
        <position position="254"/>
    </location>
</feature>
<feature type="sequence conflict" description="In Ref. 1; GT277780." evidence="5" ref="1">
    <original>Q</original>
    <variation>L</variation>
    <location>
        <position position="260"/>
    </location>
</feature>
<name>NRP_PINMA</name>
<proteinExistence type="evidence at protein level"/>
<evidence type="ECO:0000255" key="1"/>
<evidence type="ECO:0000256" key="2">
    <source>
        <dbReference type="SAM" id="MobiDB-lite"/>
    </source>
</evidence>
<evidence type="ECO:0000269" key="3">
    <source>
    </source>
</evidence>
<evidence type="ECO:0000269" key="4">
    <source>
    </source>
</evidence>
<evidence type="ECO:0000305" key="5"/>
<protein>
    <recommendedName>
        <fullName>Asparagine-rich protein</fullName>
    </recommendedName>
    <alternativeName>
        <fullName>Nacre uncharacterized shell protein 5</fullName>
        <shortName>NUSP5</shortName>
    </alternativeName>
</protein>
<dbReference type="EMBL" id="GT277780">
    <property type="status" value="NOT_ANNOTATED_CDS"/>
    <property type="molecule type" value="mRNA"/>
</dbReference>
<dbReference type="EMBL" id="GT277989">
    <property type="status" value="NOT_ANNOTATED_CDS"/>
    <property type="molecule type" value="mRNA"/>
</dbReference>
<dbReference type="EMBL" id="GT279760">
    <property type="status" value="NOT_ANNOTATED_CDS"/>
    <property type="molecule type" value="mRNA"/>
</dbReference>
<dbReference type="EMBL" id="GT280013">
    <property type="status" value="NOT_ANNOTATED_CDS"/>
    <property type="molecule type" value="mRNA"/>
</dbReference>
<dbReference type="EMBL" id="GT281522">
    <property type="status" value="NOT_ANNOTATED_CDS"/>
    <property type="molecule type" value="mRNA"/>
</dbReference>
<dbReference type="EMBL" id="GT281589">
    <property type="status" value="NOT_ANNOTATED_CDS"/>
    <property type="molecule type" value="mRNA"/>
</dbReference>
<dbReference type="EMBL" id="GT281828">
    <property type="status" value="NOT_ANNOTATED_CDS"/>
    <property type="molecule type" value="mRNA"/>
</dbReference>
<dbReference type="EMBL" id="GT283071">
    <property type="status" value="NOT_ANNOTATED_CDS"/>
    <property type="molecule type" value="mRNA"/>
</dbReference>
<dbReference type="EMBL" id="GT283312">
    <property type="status" value="NOT_ANNOTATED_CDS"/>
    <property type="molecule type" value="mRNA"/>
</dbReference>
<dbReference type="EMBL" id="GT283632">
    <property type="status" value="NOT_ANNOTATED_CDS"/>
    <property type="molecule type" value="mRNA"/>
</dbReference>
<dbReference type="EMBL" id="EZ420175">
    <property type="status" value="NOT_ANNOTATED_CDS"/>
    <property type="molecule type" value="mRNA"/>
</dbReference>
<dbReference type="GO" id="GO:0005576">
    <property type="term" value="C:extracellular region"/>
    <property type="evidence" value="ECO:0007669"/>
    <property type="project" value="UniProtKB-SubCell"/>
</dbReference>
<reference evidence="5" key="1">
    <citation type="journal article" date="2010" name="Mol. Biol. Evol.">
        <title>Parallel evolution of nacre building gene sets in molluscs.</title>
        <authorList>
            <person name="Jackson D.J."/>
            <person name="McDougall C."/>
            <person name="Woodcroft B."/>
            <person name="Moase P."/>
            <person name="Rose R.A."/>
            <person name="Kube M."/>
            <person name="Reinhardt R."/>
            <person name="Rokhsar D.S."/>
            <person name="Montagnani C."/>
            <person name="Joubert C."/>
            <person name="Piquemal D."/>
            <person name="Degnan B.M."/>
        </authorList>
    </citation>
    <scope>NUCLEOTIDE SEQUENCE [MRNA]</scope>
    <scope>IDENTIFICATION</scope>
    <source>
        <tissue evidence="3">Mantle</tissue>
    </source>
</reference>
<reference key="2">
    <citation type="journal article" date="2012" name="Proc. Natl. Acad. Sci. U.S.A.">
        <title>Different secretory repertoires control the biomineralization processes of prism and nacre deposition of the pearl oyster shell.</title>
        <authorList>
            <person name="Marie B."/>
            <person name="Joubert C."/>
            <person name="Tayale A."/>
            <person name="Zanella-Cleon I."/>
            <person name="Belliard C."/>
            <person name="Piquemal D."/>
            <person name="Cochennec-Laureau N."/>
            <person name="Marin F."/>
            <person name="Gueguen Y."/>
            <person name="Montagnani C."/>
        </authorList>
    </citation>
    <scope>PROTEIN SEQUENCE OF 208-219 AND 225-232</scope>
    <scope>SUBCELLULAR LOCATION</scope>
    <scope>TISSUE SPECIFICITY</scope>
    <source>
        <tissue>Shell</tissue>
    </source>
</reference>